<sequence>MEMKQISETTLKITISMEDLEDRGMELKDFLIPQEKTEEFFYSVMDELDLPENFKNSGMLSFRVTPKKDRIDVFVTKSELSKDLNLEELADLGDISKMSPEDFFKTLEQSMLEKGDTDAHAKLAEIENMMDKATQEVVEENVSEEQAEKEVETIGYVHYVFDFDNIEAVVRFSQTIDFPIEASELYKNGKGYHMTILLDLENQPSYFANLMYARMLEHANVGTKTRAYLKEHSIQLIHDDAISKLQMIEMG</sequence>
<organism>
    <name type="scientific">Streptococcus agalactiae serotype Ia (strain ATCC 27591 / A909 / CDC SS700)</name>
    <dbReference type="NCBI Taxonomy" id="205921"/>
    <lineage>
        <taxon>Bacteria</taxon>
        <taxon>Bacillati</taxon>
        <taxon>Bacillota</taxon>
        <taxon>Bacilli</taxon>
        <taxon>Lactobacillales</taxon>
        <taxon>Streptococcaceae</taxon>
        <taxon>Streptococcus</taxon>
    </lineage>
</organism>
<dbReference type="EMBL" id="CP000114">
    <property type="protein sequence ID" value="ABA45965.1"/>
    <property type="molecule type" value="Genomic_DNA"/>
</dbReference>
<dbReference type="RefSeq" id="WP_000425370.1">
    <property type="nucleotide sequence ID" value="NC_007432.1"/>
</dbReference>
<dbReference type="SMR" id="Q3K3N3"/>
<dbReference type="KEGG" id="sak:SAK_0197"/>
<dbReference type="HOGENOM" id="CLU_071496_1_0_9"/>
<dbReference type="GO" id="GO:0030674">
    <property type="term" value="F:protein-macromolecule adaptor activity"/>
    <property type="evidence" value="ECO:0007669"/>
    <property type="project" value="UniProtKB-UniRule"/>
</dbReference>
<dbReference type="Gene3D" id="3.30.70.1950">
    <property type="match status" value="1"/>
</dbReference>
<dbReference type="HAMAP" id="MF_01124">
    <property type="entry name" value="MecA"/>
    <property type="match status" value="1"/>
</dbReference>
<dbReference type="InterPro" id="IPR038471">
    <property type="entry name" value="MecA_C_sf"/>
</dbReference>
<dbReference type="InterPro" id="IPR008681">
    <property type="entry name" value="Neg-reg_MecA"/>
</dbReference>
<dbReference type="NCBIfam" id="NF002643">
    <property type="entry name" value="PRK02315.1-4"/>
    <property type="match status" value="1"/>
</dbReference>
<dbReference type="PANTHER" id="PTHR39161">
    <property type="entry name" value="ADAPTER PROTEIN MECA"/>
    <property type="match status" value="1"/>
</dbReference>
<dbReference type="PANTHER" id="PTHR39161:SF1">
    <property type="entry name" value="ADAPTER PROTEIN MECA 1"/>
    <property type="match status" value="1"/>
</dbReference>
<dbReference type="Pfam" id="PF05389">
    <property type="entry name" value="MecA"/>
    <property type="match status" value="1"/>
</dbReference>
<dbReference type="PIRSF" id="PIRSF029008">
    <property type="entry name" value="MecA"/>
    <property type="match status" value="1"/>
</dbReference>
<feature type="chain" id="PRO_1000065349" description="Adapter protein MecA">
    <location>
        <begin position="1"/>
        <end position="251"/>
    </location>
</feature>
<accession>Q3K3N3</accession>
<gene>
    <name evidence="1" type="primary">mecA</name>
    <name type="ordered locus">SAK_0197</name>
</gene>
<proteinExistence type="inferred from homology"/>
<protein>
    <recommendedName>
        <fullName evidence="1">Adapter protein MecA</fullName>
    </recommendedName>
</protein>
<comment type="function">
    <text evidence="1">Enables the recognition and targeting of unfolded and aggregated proteins to the ClpC protease or to other proteins involved in proteolysis.</text>
</comment>
<comment type="subunit">
    <text evidence="1">Homodimer.</text>
</comment>
<comment type="domain">
    <text>The N-terminal domain probably binds unfolded/aggregated proteins; the C-terminal domain interacts with ClpC.</text>
</comment>
<comment type="similarity">
    <text evidence="1">Belongs to the MecA family.</text>
</comment>
<reference key="1">
    <citation type="journal article" date="2005" name="Proc. Natl. Acad. Sci. U.S.A.">
        <title>Genome analysis of multiple pathogenic isolates of Streptococcus agalactiae: implications for the microbial 'pan-genome'.</title>
        <authorList>
            <person name="Tettelin H."/>
            <person name="Masignani V."/>
            <person name="Cieslewicz M.J."/>
            <person name="Donati C."/>
            <person name="Medini D."/>
            <person name="Ward N.L."/>
            <person name="Angiuoli S.V."/>
            <person name="Crabtree J."/>
            <person name="Jones A.L."/>
            <person name="Durkin A.S."/>
            <person name="DeBoy R.T."/>
            <person name="Davidsen T.M."/>
            <person name="Mora M."/>
            <person name="Scarselli M."/>
            <person name="Margarit y Ros I."/>
            <person name="Peterson J.D."/>
            <person name="Hauser C.R."/>
            <person name="Sundaram J.P."/>
            <person name="Nelson W.C."/>
            <person name="Madupu R."/>
            <person name="Brinkac L.M."/>
            <person name="Dodson R.J."/>
            <person name="Rosovitz M.J."/>
            <person name="Sullivan S.A."/>
            <person name="Daugherty S.C."/>
            <person name="Haft D.H."/>
            <person name="Selengut J."/>
            <person name="Gwinn M.L."/>
            <person name="Zhou L."/>
            <person name="Zafar N."/>
            <person name="Khouri H."/>
            <person name="Radune D."/>
            <person name="Dimitrov G."/>
            <person name="Watkins K."/>
            <person name="O'Connor K.J."/>
            <person name="Smith S."/>
            <person name="Utterback T.R."/>
            <person name="White O."/>
            <person name="Rubens C.E."/>
            <person name="Grandi G."/>
            <person name="Madoff L.C."/>
            <person name="Kasper D.L."/>
            <person name="Telford J.L."/>
            <person name="Wessels M.R."/>
            <person name="Rappuoli R."/>
            <person name="Fraser C.M."/>
        </authorList>
    </citation>
    <scope>NUCLEOTIDE SEQUENCE [LARGE SCALE GENOMIC DNA]</scope>
    <source>
        <strain>ATCC 27591 / A909 / CDC SS700</strain>
    </source>
</reference>
<name>MECA_STRA1</name>
<evidence type="ECO:0000255" key="1">
    <source>
        <dbReference type="HAMAP-Rule" id="MF_01124"/>
    </source>
</evidence>